<protein>
    <recommendedName>
        <fullName evidence="1">Small ribosomal subunit protein uS2</fullName>
    </recommendedName>
    <alternativeName>
        <fullName evidence="2">30S ribosomal protein S2</fullName>
    </alternativeName>
</protein>
<feature type="chain" id="PRO_1000115045" description="Small ribosomal subunit protein uS2">
    <location>
        <begin position="1"/>
        <end position="247"/>
    </location>
</feature>
<evidence type="ECO:0000255" key="1">
    <source>
        <dbReference type="HAMAP-Rule" id="MF_00291"/>
    </source>
</evidence>
<evidence type="ECO:0000305" key="2"/>
<gene>
    <name evidence="1" type="primary">rpsB</name>
    <name type="ordered locus">Rpic_1278</name>
</gene>
<comment type="similarity">
    <text evidence="1">Belongs to the universal ribosomal protein uS2 family.</text>
</comment>
<organism>
    <name type="scientific">Ralstonia pickettii (strain 12J)</name>
    <dbReference type="NCBI Taxonomy" id="402626"/>
    <lineage>
        <taxon>Bacteria</taxon>
        <taxon>Pseudomonadati</taxon>
        <taxon>Pseudomonadota</taxon>
        <taxon>Betaproteobacteria</taxon>
        <taxon>Burkholderiales</taxon>
        <taxon>Burkholderiaceae</taxon>
        <taxon>Ralstonia</taxon>
    </lineage>
</organism>
<name>RS2_RALPJ</name>
<keyword id="KW-0687">Ribonucleoprotein</keyword>
<keyword id="KW-0689">Ribosomal protein</keyword>
<reference key="1">
    <citation type="submission" date="2008-05" db="EMBL/GenBank/DDBJ databases">
        <title>Complete sequence of chromosome 1 of Ralstonia pickettii 12J.</title>
        <authorList>
            <person name="Lucas S."/>
            <person name="Copeland A."/>
            <person name="Lapidus A."/>
            <person name="Glavina del Rio T."/>
            <person name="Dalin E."/>
            <person name="Tice H."/>
            <person name="Bruce D."/>
            <person name="Goodwin L."/>
            <person name="Pitluck S."/>
            <person name="Meincke L."/>
            <person name="Brettin T."/>
            <person name="Detter J.C."/>
            <person name="Han C."/>
            <person name="Kuske C.R."/>
            <person name="Schmutz J."/>
            <person name="Larimer F."/>
            <person name="Land M."/>
            <person name="Hauser L."/>
            <person name="Kyrpides N."/>
            <person name="Mikhailova N."/>
            <person name="Marsh T."/>
            <person name="Richardson P."/>
        </authorList>
    </citation>
    <scope>NUCLEOTIDE SEQUENCE [LARGE SCALE GENOMIC DNA]</scope>
    <source>
        <strain>12J</strain>
    </source>
</reference>
<proteinExistence type="inferred from homology"/>
<sequence>MSVTMREMLEAGVHFGHQTRFWNPKMAPFIFGHRNKIHIINLEKTLPMYQDALKYVRQLAANRGTILFVGTKRQSREILAEEAARAGMPFVDSRWLGGMLTNFKTVKTSIKRLKDMEVAKEAGATETMSKKEALMFEREMDKLVKSIGGIKDMGGIPDAIFVVDVGYHKIAVTEAAKLGIPVIGVVDTNHSPEGIDYVIPGNDDSSKAVALYVRGVADAILEGRANAVQEVVEAARGGDDFVEVQEG</sequence>
<accession>B2UB06</accession>
<dbReference type="EMBL" id="CP001068">
    <property type="protein sequence ID" value="ACD26422.1"/>
    <property type="molecule type" value="Genomic_DNA"/>
</dbReference>
<dbReference type="SMR" id="B2UB06"/>
<dbReference type="STRING" id="402626.Rpic_1278"/>
<dbReference type="KEGG" id="rpi:Rpic_1278"/>
<dbReference type="eggNOG" id="COG0052">
    <property type="taxonomic scope" value="Bacteria"/>
</dbReference>
<dbReference type="HOGENOM" id="CLU_040318_1_2_4"/>
<dbReference type="GO" id="GO:0022627">
    <property type="term" value="C:cytosolic small ribosomal subunit"/>
    <property type="evidence" value="ECO:0007669"/>
    <property type="project" value="TreeGrafter"/>
</dbReference>
<dbReference type="GO" id="GO:0003735">
    <property type="term" value="F:structural constituent of ribosome"/>
    <property type="evidence" value="ECO:0007669"/>
    <property type="project" value="InterPro"/>
</dbReference>
<dbReference type="GO" id="GO:0006412">
    <property type="term" value="P:translation"/>
    <property type="evidence" value="ECO:0007669"/>
    <property type="project" value="UniProtKB-UniRule"/>
</dbReference>
<dbReference type="CDD" id="cd01425">
    <property type="entry name" value="RPS2"/>
    <property type="match status" value="1"/>
</dbReference>
<dbReference type="FunFam" id="1.10.287.610:FF:000001">
    <property type="entry name" value="30S ribosomal protein S2"/>
    <property type="match status" value="1"/>
</dbReference>
<dbReference type="Gene3D" id="3.40.50.10490">
    <property type="entry name" value="Glucose-6-phosphate isomerase like protein, domain 1"/>
    <property type="match status" value="1"/>
</dbReference>
<dbReference type="Gene3D" id="1.10.287.610">
    <property type="entry name" value="Helix hairpin bin"/>
    <property type="match status" value="1"/>
</dbReference>
<dbReference type="HAMAP" id="MF_00291_B">
    <property type="entry name" value="Ribosomal_uS2_B"/>
    <property type="match status" value="1"/>
</dbReference>
<dbReference type="InterPro" id="IPR001865">
    <property type="entry name" value="Ribosomal_uS2"/>
</dbReference>
<dbReference type="InterPro" id="IPR005706">
    <property type="entry name" value="Ribosomal_uS2_bac/mit/plastid"/>
</dbReference>
<dbReference type="InterPro" id="IPR018130">
    <property type="entry name" value="Ribosomal_uS2_CS"/>
</dbReference>
<dbReference type="InterPro" id="IPR023591">
    <property type="entry name" value="Ribosomal_uS2_flav_dom_sf"/>
</dbReference>
<dbReference type="NCBIfam" id="TIGR01011">
    <property type="entry name" value="rpsB_bact"/>
    <property type="match status" value="1"/>
</dbReference>
<dbReference type="PANTHER" id="PTHR12534">
    <property type="entry name" value="30S RIBOSOMAL PROTEIN S2 PROKARYOTIC AND ORGANELLAR"/>
    <property type="match status" value="1"/>
</dbReference>
<dbReference type="PANTHER" id="PTHR12534:SF0">
    <property type="entry name" value="SMALL RIBOSOMAL SUBUNIT PROTEIN US2M"/>
    <property type="match status" value="1"/>
</dbReference>
<dbReference type="Pfam" id="PF00318">
    <property type="entry name" value="Ribosomal_S2"/>
    <property type="match status" value="1"/>
</dbReference>
<dbReference type="PRINTS" id="PR00395">
    <property type="entry name" value="RIBOSOMALS2"/>
</dbReference>
<dbReference type="SUPFAM" id="SSF52313">
    <property type="entry name" value="Ribosomal protein S2"/>
    <property type="match status" value="1"/>
</dbReference>
<dbReference type="PROSITE" id="PS00962">
    <property type="entry name" value="RIBOSOMAL_S2_1"/>
    <property type="match status" value="1"/>
</dbReference>